<accession>Q6L8L5</accession>
<accession>B1XMW0</accession>
<gene>
    <name evidence="1" type="primary">kaiC</name>
    <name type="ordered locus">SYNPCC7002_A0287</name>
</gene>
<keyword id="KW-0067">ATP-binding</keyword>
<keyword id="KW-0090">Biological rhythms</keyword>
<keyword id="KW-0378">Hydrolase</keyword>
<keyword id="KW-0418">Kinase</keyword>
<keyword id="KW-0460">Magnesium</keyword>
<keyword id="KW-0479">Metal-binding</keyword>
<keyword id="KW-0547">Nucleotide-binding</keyword>
<keyword id="KW-0597">Phosphoprotein</keyword>
<keyword id="KW-1185">Reference proteome</keyword>
<keyword id="KW-0677">Repeat</keyword>
<keyword id="KW-0723">Serine/threonine-protein kinase</keyword>
<keyword id="KW-0804">Transcription</keyword>
<keyword id="KW-0805">Transcription regulation</keyword>
<keyword id="KW-0808">Transferase</keyword>
<dbReference type="EC" id="2.7.11.1" evidence="1"/>
<dbReference type="EC" id="3.6.4.-" evidence="1"/>
<dbReference type="EMBL" id="AB120711">
    <property type="protein sequence ID" value="BAD21213.1"/>
    <property type="molecule type" value="Genomic_DNA"/>
</dbReference>
<dbReference type="EMBL" id="CP000951">
    <property type="protein sequence ID" value="ACA98297.1"/>
    <property type="molecule type" value="Genomic_DNA"/>
</dbReference>
<dbReference type="RefSeq" id="WP_012305921.1">
    <property type="nucleotide sequence ID" value="NZ_JAHHPU010000004.1"/>
</dbReference>
<dbReference type="SMR" id="Q6L8L5"/>
<dbReference type="STRING" id="32049.SYNPCC7002_A0287"/>
<dbReference type="KEGG" id="syp:SYNPCC7002_A0287"/>
<dbReference type="eggNOG" id="COG0467">
    <property type="taxonomic scope" value="Bacteria"/>
</dbReference>
<dbReference type="HOGENOM" id="CLU_023669_4_1_3"/>
<dbReference type="Proteomes" id="UP000001688">
    <property type="component" value="Chromosome"/>
</dbReference>
<dbReference type="GO" id="GO:0005524">
    <property type="term" value="F:ATP binding"/>
    <property type="evidence" value="ECO:0007669"/>
    <property type="project" value="UniProtKB-UniRule"/>
</dbReference>
<dbReference type="GO" id="GO:0016887">
    <property type="term" value="F:ATP hydrolysis activity"/>
    <property type="evidence" value="ECO:0007669"/>
    <property type="project" value="RHEA"/>
</dbReference>
<dbReference type="GO" id="GO:0003677">
    <property type="term" value="F:DNA binding"/>
    <property type="evidence" value="ECO:0007669"/>
    <property type="project" value="InterPro"/>
</dbReference>
<dbReference type="GO" id="GO:0000287">
    <property type="term" value="F:magnesium ion binding"/>
    <property type="evidence" value="ECO:0007669"/>
    <property type="project" value="UniProtKB-UniRule"/>
</dbReference>
<dbReference type="GO" id="GO:0106310">
    <property type="term" value="F:protein serine kinase activity"/>
    <property type="evidence" value="ECO:0007669"/>
    <property type="project" value="RHEA"/>
</dbReference>
<dbReference type="GO" id="GO:0004674">
    <property type="term" value="F:protein serine/threonine kinase activity"/>
    <property type="evidence" value="ECO:0007669"/>
    <property type="project" value="UniProtKB-KW"/>
</dbReference>
<dbReference type="GO" id="GO:0004712">
    <property type="term" value="F:protein serine/threonine/tyrosine kinase activity"/>
    <property type="evidence" value="ECO:0007669"/>
    <property type="project" value="UniProtKB-UniRule"/>
</dbReference>
<dbReference type="GO" id="GO:0007623">
    <property type="term" value="P:circadian rhythm"/>
    <property type="evidence" value="ECO:0007669"/>
    <property type="project" value="UniProtKB-UniRule"/>
</dbReference>
<dbReference type="GO" id="GO:0042752">
    <property type="term" value="P:regulation of circadian rhythm"/>
    <property type="evidence" value="ECO:0007669"/>
    <property type="project" value="InterPro"/>
</dbReference>
<dbReference type="GO" id="GO:0006355">
    <property type="term" value="P:regulation of DNA-templated transcription"/>
    <property type="evidence" value="ECO:0007669"/>
    <property type="project" value="InterPro"/>
</dbReference>
<dbReference type="CDD" id="cd19485">
    <property type="entry name" value="KaiC-N"/>
    <property type="match status" value="1"/>
</dbReference>
<dbReference type="CDD" id="cd19484">
    <property type="entry name" value="KaiC_C"/>
    <property type="match status" value="1"/>
</dbReference>
<dbReference type="FunFam" id="3.40.50.300:FF:001364">
    <property type="entry name" value="Circadian clock protein kinase KaiC"/>
    <property type="match status" value="1"/>
</dbReference>
<dbReference type="Gene3D" id="3.40.50.300">
    <property type="entry name" value="P-loop containing nucleotide triphosphate hydrolases"/>
    <property type="match status" value="2"/>
</dbReference>
<dbReference type="HAMAP" id="MF_01836">
    <property type="entry name" value="KaiC"/>
    <property type="match status" value="1"/>
</dbReference>
<dbReference type="InterPro" id="IPR051347">
    <property type="entry name" value="Circadian_clock_KaiC-rel"/>
</dbReference>
<dbReference type="InterPro" id="IPR013503">
    <property type="entry name" value="Circadian_KaiC_bact"/>
</dbReference>
<dbReference type="InterPro" id="IPR030665">
    <property type="entry name" value="KaiC"/>
</dbReference>
<dbReference type="InterPro" id="IPR014774">
    <property type="entry name" value="KaiC-like_dom"/>
</dbReference>
<dbReference type="InterPro" id="IPR047222">
    <property type="entry name" value="KaiC_C"/>
</dbReference>
<dbReference type="InterPro" id="IPR010624">
    <property type="entry name" value="KaiC_dom"/>
</dbReference>
<dbReference type="InterPro" id="IPR047221">
    <property type="entry name" value="KaiC_N"/>
</dbReference>
<dbReference type="InterPro" id="IPR027417">
    <property type="entry name" value="P-loop_NTPase"/>
</dbReference>
<dbReference type="NCBIfam" id="TIGR02655">
    <property type="entry name" value="circ_KaiC"/>
    <property type="match status" value="1"/>
</dbReference>
<dbReference type="NCBIfam" id="NF006799">
    <property type="entry name" value="PRK09302.1"/>
    <property type="match status" value="1"/>
</dbReference>
<dbReference type="PANTHER" id="PTHR42926">
    <property type="match status" value="1"/>
</dbReference>
<dbReference type="PANTHER" id="PTHR42926:SF1">
    <property type="entry name" value="CIRCADIAN CLOCK OSCILLATOR PROTEIN KAIC 1"/>
    <property type="match status" value="1"/>
</dbReference>
<dbReference type="Pfam" id="PF06745">
    <property type="entry name" value="ATPase"/>
    <property type="match status" value="2"/>
</dbReference>
<dbReference type="PIRSF" id="PIRSF039117">
    <property type="entry name" value="KaiC"/>
    <property type="match status" value="1"/>
</dbReference>
<dbReference type="PRINTS" id="PR01874">
    <property type="entry name" value="DNAREPAIRADA"/>
</dbReference>
<dbReference type="SUPFAM" id="SSF52540">
    <property type="entry name" value="P-loop containing nucleoside triphosphate hydrolases"/>
    <property type="match status" value="2"/>
</dbReference>
<dbReference type="PROSITE" id="PS51146">
    <property type="entry name" value="KAIC"/>
    <property type="match status" value="2"/>
</dbReference>
<organism>
    <name type="scientific">Picosynechococcus sp. (strain ATCC 27264 / PCC 7002 / PR-6)</name>
    <name type="common">Agmenellum quadruplicatum</name>
    <dbReference type="NCBI Taxonomy" id="32049"/>
    <lineage>
        <taxon>Bacteria</taxon>
        <taxon>Bacillati</taxon>
        <taxon>Cyanobacteriota</taxon>
        <taxon>Cyanophyceae</taxon>
        <taxon>Oscillatoriophycideae</taxon>
        <taxon>Chroococcales</taxon>
        <taxon>Geminocystaceae</taxon>
        <taxon>Picosynechococcus</taxon>
    </lineage>
</organism>
<protein>
    <recommendedName>
        <fullName evidence="1">Circadian clock oscillator protein KaiC</fullName>
        <ecNumber evidence="1">2.7.11.1</ecNumber>
        <ecNumber evidence="1">3.6.4.-</ecNumber>
    </recommendedName>
</protein>
<proteinExistence type="inferred from homology"/>
<evidence type="ECO:0000255" key="1">
    <source>
        <dbReference type="HAMAP-Rule" id="MF_01836"/>
    </source>
</evidence>
<evidence type="ECO:0000305" key="2"/>
<name>KAIC_PICP2</name>
<reference key="1">
    <citation type="journal article" date="2004" name="Nat. Struct. Mol. Biol.">
        <title>Crystal structure of the C-terminal clock-oscillator domain of the cyanobacterial KaiA protein.</title>
        <authorList>
            <person name="Uzumaki T."/>
            <person name="Fujita M."/>
            <person name="Nakatsu T."/>
            <person name="Hayashi F."/>
            <person name="Shibata H."/>
            <person name="Itoh N."/>
            <person name="Kato H."/>
            <person name="Ishiura M."/>
        </authorList>
    </citation>
    <scope>NUCLEOTIDE SEQUENCE [GENOMIC DNA]</scope>
</reference>
<reference key="2">
    <citation type="submission" date="2008-02" db="EMBL/GenBank/DDBJ databases">
        <title>Complete sequence of Synechococcus sp. PCC 7002.</title>
        <authorList>
            <person name="Li T."/>
            <person name="Zhao J."/>
            <person name="Zhao C."/>
            <person name="Liu Z."/>
            <person name="Zhao F."/>
            <person name="Marquardt J."/>
            <person name="Nomura C.T."/>
            <person name="Persson S."/>
            <person name="Detter J.C."/>
            <person name="Richardson P.M."/>
            <person name="Lanz C."/>
            <person name="Schuster S.C."/>
            <person name="Wang J."/>
            <person name="Li S."/>
            <person name="Huang X."/>
            <person name="Cai T."/>
            <person name="Yu Z."/>
            <person name="Luo J."/>
            <person name="Zhao J."/>
            <person name="Bryant D.A."/>
        </authorList>
    </citation>
    <scope>NUCLEOTIDE SEQUENCE [LARGE SCALE GENOMIC DNA]</scope>
    <source>
        <strain>ATCC 27264 / PCC 7002 / PR-6</strain>
    </source>
</reference>
<sequence length="516" mass="57440">MNQPTSSNNGAIKGVQKIRTLIEGLDEISHGGLPSGRTTLVSGTSGTGKTLLAIQFLYHGIKHFDYPGLFVTFEESPRDIIQNAHSFGWDLQSLVDEGKLFILDASPDPDGQEVVGNFDLSALIERIQYAIRKYNAKLVSIDSVTAVFQQYDAAPVVRREIFRLVARLKHLAVTSIMTTERLDEYGPVARFGVEEFVSDNVVILRNVLEGERRRRTIEILKLRGTTHMKGEYPFTITNDGINIFPLGAMRLTQRSSNARISSGVETLDKMCGGGFFKDSIILATGATGTGKTLLVSKFLEEGCRRGERAILFAYEESRAQLSRNASSWGIDFEEMERKGLLKLLCSYPESAGLEDHLQMIKSEISEFKPSRIAIDSLSALARGVTNNAFRQFVIGVTGYAKQEEITGFFTNTTDQFMGAHSITESHISTITDTILMLQYVEIRGEMSRAINVFKMRGSWHDKGIREYTISEGGAAIKDSFRNYERIISGSPTRIAVDEKSELSRIMRGVQDKTLPE</sequence>
<feature type="chain" id="PRO_0000217781" description="Circadian clock oscillator protein KaiC">
    <location>
        <begin position="1"/>
        <end position="516"/>
    </location>
</feature>
<feature type="domain" description="KaiC 1" evidence="1">
    <location>
        <begin position="1"/>
        <end position="244"/>
    </location>
</feature>
<feature type="domain" description="KaiC 2" evidence="1">
    <location>
        <begin position="258"/>
        <end position="516"/>
    </location>
</feature>
<feature type="binding site" evidence="1">
    <location>
        <position position="46"/>
    </location>
    <ligand>
        <name>ATP</name>
        <dbReference type="ChEBI" id="CHEBI:30616"/>
        <label>1</label>
        <note>ligand shared between homodimeric partners</note>
    </ligand>
</feature>
<feature type="binding site" evidence="1">
    <location>
        <position position="47"/>
    </location>
    <ligand>
        <name>ATP</name>
        <dbReference type="ChEBI" id="CHEBI:30616"/>
        <label>1</label>
        <note>ligand shared between homodimeric partners</note>
    </ligand>
</feature>
<feature type="binding site" evidence="1">
    <location>
        <position position="48"/>
    </location>
    <ligand>
        <name>ATP</name>
        <dbReference type="ChEBI" id="CHEBI:30616"/>
        <label>1</label>
        <note>ligand shared between homodimeric partners</note>
    </ligand>
</feature>
<feature type="binding site" evidence="1">
    <location>
        <position position="49"/>
    </location>
    <ligand>
        <name>ATP</name>
        <dbReference type="ChEBI" id="CHEBI:30616"/>
        <label>1</label>
        <note>ligand shared between homodimeric partners</note>
    </ligand>
</feature>
<feature type="binding site" evidence="1">
    <location>
        <position position="50"/>
    </location>
    <ligand>
        <name>ATP</name>
        <dbReference type="ChEBI" id="CHEBI:30616"/>
        <label>1</label>
        <note>ligand shared between homodimeric partners</note>
    </ligand>
</feature>
<feature type="binding site" evidence="1">
    <location>
        <position position="50"/>
    </location>
    <ligand>
        <name>Mg(2+)</name>
        <dbReference type="ChEBI" id="CHEBI:18420"/>
        <label>1</label>
    </ligand>
</feature>
<feature type="binding site" evidence="1">
    <location>
        <position position="51"/>
    </location>
    <ligand>
        <name>ATP</name>
        <dbReference type="ChEBI" id="CHEBI:30616"/>
        <label>1</label>
        <note>ligand shared between homodimeric partners</note>
    </ligand>
</feature>
<feature type="binding site" evidence="1">
    <location>
        <position position="86"/>
    </location>
    <ligand>
        <name>ATP</name>
        <dbReference type="ChEBI" id="CHEBI:30616"/>
        <label>1</label>
        <note>ligand shared between homodimeric partners</note>
    </ligand>
</feature>
<feature type="binding site" evidence="1">
    <location>
        <position position="221"/>
    </location>
    <ligand>
        <name>ATP</name>
        <dbReference type="ChEBI" id="CHEBI:30616"/>
        <label>1</label>
        <note>ligand shared between homodimeric partners</note>
    </ligand>
</feature>
<feature type="binding site" evidence="1">
    <location>
        <position position="222"/>
    </location>
    <ligand>
        <name>ATP</name>
        <dbReference type="ChEBI" id="CHEBI:30616"/>
        <label>1</label>
        <note>ligand shared between homodimeric partners</note>
    </ligand>
</feature>
<feature type="binding site" evidence="1">
    <location>
        <position position="223"/>
    </location>
    <ligand>
        <name>ATP</name>
        <dbReference type="ChEBI" id="CHEBI:30616"/>
        <label>1</label>
        <note>ligand shared between homodimeric partners</note>
    </ligand>
</feature>
<feature type="binding site" evidence="1">
    <location>
        <position position="225"/>
    </location>
    <ligand>
        <name>ATP</name>
        <dbReference type="ChEBI" id="CHEBI:30616"/>
        <label>1</label>
        <note>ligand shared between homodimeric partners</note>
    </ligand>
</feature>
<feature type="binding site" evidence="1">
    <location>
        <position position="227"/>
    </location>
    <ligand>
        <name>ATP</name>
        <dbReference type="ChEBI" id="CHEBI:30616"/>
        <label>1</label>
        <note>ligand shared between homodimeric partners</note>
    </ligand>
</feature>
<feature type="binding site" evidence="1">
    <location>
        <position position="237"/>
    </location>
    <ligand>
        <name>ATP</name>
        <dbReference type="ChEBI" id="CHEBI:30616"/>
        <label>1</label>
        <note>ligand shared between homodimeric partners</note>
    </ligand>
</feature>
<feature type="binding site" evidence="1">
    <location>
        <position position="287"/>
    </location>
    <ligand>
        <name>ATP</name>
        <dbReference type="ChEBI" id="CHEBI:30616"/>
        <label>2</label>
        <note>ligand shared between homodimeric partners</note>
    </ligand>
</feature>
<feature type="binding site" evidence="1">
    <location>
        <position position="288"/>
    </location>
    <ligand>
        <name>ATP</name>
        <dbReference type="ChEBI" id="CHEBI:30616"/>
        <label>2</label>
        <note>ligand shared between homodimeric partners</note>
    </ligand>
</feature>
<feature type="binding site" evidence="1">
    <location>
        <position position="289"/>
    </location>
    <ligand>
        <name>ATP</name>
        <dbReference type="ChEBI" id="CHEBI:30616"/>
        <label>2</label>
        <note>ligand shared between homodimeric partners</note>
    </ligand>
</feature>
<feature type="binding site" evidence="1">
    <location>
        <position position="290"/>
    </location>
    <ligand>
        <name>ATP</name>
        <dbReference type="ChEBI" id="CHEBI:30616"/>
        <label>2</label>
        <note>ligand shared between homodimeric partners</note>
    </ligand>
</feature>
<feature type="binding site" evidence="1">
    <location>
        <position position="291"/>
    </location>
    <ligand>
        <name>ATP</name>
        <dbReference type="ChEBI" id="CHEBI:30616"/>
        <label>2</label>
        <note>ligand shared between homodimeric partners</note>
    </ligand>
</feature>
<feature type="binding site" evidence="1">
    <location>
        <position position="292"/>
    </location>
    <ligand>
        <name>ATP</name>
        <dbReference type="ChEBI" id="CHEBI:30616"/>
        <label>2</label>
        <note>ligand shared between homodimeric partners</note>
    </ligand>
</feature>
<feature type="binding site" evidence="1">
    <location>
        <position position="292"/>
    </location>
    <ligand>
        <name>Mg(2+)</name>
        <dbReference type="ChEBI" id="CHEBI:18420"/>
        <label>2</label>
    </ligand>
</feature>
<feature type="binding site" evidence="1">
    <location>
        <position position="293"/>
    </location>
    <ligand>
        <name>ATP</name>
        <dbReference type="ChEBI" id="CHEBI:30616"/>
        <label>2</label>
        <note>ligand shared between homodimeric partners</note>
    </ligand>
</feature>
<feature type="binding site" evidence="1">
    <location>
        <position position="315"/>
    </location>
    <ligand>
        <name>Mg(2+)</name>
        <dbReference type="ChEBI" id="CHEBI:18420"/>
        <label>2</label>
    </ligand>
</feature>
<feature type="binding site" evidence="1">
    <location>
        <position position="328"/>
    </location>
    <ligand>
        <name>ATP</name>
        <dbReference type="ChEBI" id="CHEBI:30616"/>
        <label>2</label>
        <note>ligand shared between homodimeric partners</note>
    </ligand>
</feature>
<feature type="binding site" evidence="1">
    <location>
        <position position="448"/>
    </location>
    <ligand>
        <name>ATP</name>
        <dbReference type="ChEBI" id="CHEBI:30616"/>
        <label>2</label>
        <note>ligand shared between homodimeric partners</note>
    </ligand>
</feature>
<feature type="binding site" evidence="1">
    <location>
        <position position="454"/>
    </location>
    <ligand>
        <name>ATP</name>
        <dbReference type="ChEBI" id="CHEBI:30616"/>
        <label>2</label>
        <note>ligand shared between homodimeric partners</note>
    </ligand>
</feature>
<feature type="binding site" evidence="1">
    <location>
        <position position="455"/>
    </location>
    <ligand>
        <name>ATP</name>
        <dbReference type="ChEBI" id="CHEBI:30616"/>
        <label>2</label>
        <note>ligand shared between homodimeric partners</note>
    </ligand>
</feature>
<feature type="binding site" evidence="1">
    <location>
        <position position="456"/>
    </location>
    <ligand>
        <name>ATP</name>
        <dbReference type="ChEBI" id="CHEBI:30616"/>
        <label>2</label>
        <note>ligand shared between homodimeric partners</note>
    </ligand>
</feature>
<feature type="binding site" evidence="1">
    <location>
        <position position="458"/>
    </location>
    <ligand>
        <name>ATP</name>
        <dbReference type="ChEBI" id="CHEBI:30616"/>
        <label>2</label>
        <note>ligand shared between homodimeric partners</note>
    </ligand>
</feature>
<feature type="binding site" evidence="1">
    <location>
        <position position="460"/>
    </location>
    <ligand>
        <name>ATP</name>
        <dbReference type="ChEBI" id="CHEBI:30616"/>
        <label>2</label>
        <note>ligand shared between homodimeric partners</note>
    </ligand>
</feature>
<feature type="binding site" evidence="1">
    <location>
        <position position="462"/>
    </location>
    <ligand>
        <name>ATP</name>
        <dbReference type="ChEBI" id="CHEBI:30616"/>
        <label>2</label>
        <note>ligand shared between homodimeric partners</note>
    </ligand>
</feature>
<feature type="modified residue" description="Phosphoserine; by autocatalysis" evidence="1">
    <location>
        <position position="428"/>
    </location>
</feature>
<feature type="modified residue" description="Phosphothreonine; by autocatalysis" evidence="1">
    <location>
        <position position="429"/>
    </location>
</feature>
<feature type="sequence conflict" description="In Ref. 1; BAD21213." evidence="2" ref="1">
    <original>G</original>
    <variation>S</variation>
    <location>
        <position position="302"/>
    </location>
</feature>
<comment type="function">
    <text evidence="1">Central component of the KaiABC oscillator complex, which constitutes the main circadian regulator in cyanobacteria. Complex composition changes during the circadian cycle to control KaiC phosphorylation. KaiA stimulates KaiC autophosphorylation, while KaiB sequesters KaiA, leading to KaiC autodephosphorylation. Clock output pathways impact the RpaA transcriptional regulator. KaiC enhances the autophosphorylation activity of SasA, which then transfers its phosphate group to RpaA to activate it. KaiB and KaiC together enhance the phospho-RpaA dephosphatase activity of CikA.</text>
</comment>
<comment type="function">
    <text evidence="1">Has a weak, temperature-independent ATPase activity; ATPase activity defines the circadian period. The phosphorylation state of KaiC modulates its ATPase activity and effects KaiB binding.</text>
</comment>
<comment type="catalytic activity">
    <reaction evidence="1">
        <text>L-seryl-[protein] + ATP = O-phospho-L-seryl-[protein] + ADP + H(+)</text>
        <dbReference type="Rhea" id="RHEA:17989"/>
        <dbReference type="Rhea" id="RHEA-COMP:9863"/>
        <dbReference type="Rhea" id="RHEA-COMP:11604"/>
        <dbReference type="ChEBI" id="CHEBI:15378"/>
        <dbReference type="ChEBI" id="CHEBI:29999"/>
        <dbReference type="ChEBI" id="CHEBI:30616"/>
        <dbReference type="ChEBI" id="CHEBI:83421"/>
        <dbReference type="ChEBI" id="CHEBI:456216"/>
        <dbReference type="EC" id="2.7.11.1"/>
    </reaction>
</comment>
<comment type="catalytic activity">
    <reaction evidence="1">
        <text>L-threonyl-[protein] + ATP = O-phospho-L-threonyl-[protein] + ADP + H(+)</text>
        <dbReference type="Rhea" id="RHEA:46608"/>
        <dbReference type="Rhea" id="RHEA-COMP:11060"/>
        <dbReference type="Rhea" id="RHEA-COMP:11605"/>
        <dbReference type="ChEBI" id="CHEBI:15378"/>
        <dbReference type="ChEBI" id="CHEBI:30013"/>
        <dbReference type="ChEBI" id="CHEBI:30616"/>
        <dbReference type="ChEBI" id="CHEBI:61977"/>
        <dbReference type="ChEBI" id="CHEBI:456216"/>
        <dbReference type="EC" id="2.7.11.1"/>
    </reaction>
</comment>
<comment type="catalytic activity">
    <reaction evidence="1">
        <text>ATP + H2O = ADP + phosphate + H(+)</text>
        <dbReference type="Rhea" id="RHEA:13065"/>
        <dbReference type="ChEBI" id="CHEBI:15377"/>
        <dbReference type="ChEBI" id="CHEBI:15378"/>
        <dbReference type="ChEBI" id="CHEBI:30616"/>
        <dbReference type="ChEBI" id="CHEBI:43474"/>
        <dbReference type="ChEBI" id="CHEBI:456216"/>
    </reaction>
</comment>
<comment type="cofactor">
    <cofactor evidence="1">
        <name>Mg(2+)</name>
        <dbReference type="ChEBI" id="CHEBI:18420"/>
    </cofactor>
    <text evidence="1">Binds 2 Mg(2+) ions per subunit, one in each domain. Mg(2+) is required for hexamerization and phosphatase activity.</text>
</comment>
<comment type="activity regulation">
    <text evidence="1">The interaction with KaiA enhances its phosphorylation status, while the interaction with KaiB decreases it.</text>
</comment>
<comment type="subunit">
    <text evidence="1">Homohexamer; hexamerization is dependent on ATP-binding. The KaiABC complex composition changes during the circadian cycle to control KaiC phosphorylation. Complexes KaiC(6), KaiA(2-4):KaiC(6), KaiB(6):KaiC(6) and KaiC(6):KaiB(6):KaiA(12) are among the most important forms, many form cooperatively. KaiC interacts with SasA, activating its autokinase function and leading to RpaA activation.</text>
</comment>
<comment type="domain">
    <text evidence="1">In the homohexamer the 2 domains (called CI and CII) self-associate to each form a 'donut' layer; the compactness and local conformation of the domains varies over the cell cycle and impacts function. CII has the autokinase and autophosphatase activities, both CI and CII have (weak) ATPase activity; CI has the clock pacemaker role.</text>
</comment>
<comment type="PTM">
    <text evidence="1">Phosphorylated on serine and threonine residues by autocatalysis. Has a 4 step phosphorylation cycle; the autokinase acts first on Thr-429, then Ser-428. When Ser-428 is modified KaiC switches to an autophosphatase mode, acting first on phospho-Thr-429 then phospho-Ser-428.</text>
</comment>
<comment type="similarity">
    <text evidence="1">Belongs to the KaiC family.</text>
</comment>